<accession>Q8S8Y8</accession>
<accession>Q2V3U7</accession>
<accession>Q9LSA2</accession>
<organism>
    <name type="scientific">Arabidopsis thaliana</name>
    <name type="common">Mouse-ear cress</name>
    <dbReference type="NCBI Taxonomy" id="3702"/>
    <lineage>
        <taxon>Eukaryota</taxon>
        <taxon>Viridiplantae</taxon>
        <taxon>Streptophyta</taxon>
        <taxon>Embryophyta</taxon>
        <taxon>Tracheophyta</taxon>
        <taxon>Spermatophyta</taxon>
        <taxon>Magnoliopsida</taxon>
        <taxon>eudicotyledons</taxon>
        <taxon>Gunneridae</taxon>
        <taxon>Pentapetalae</taxon>
        <taxon>rosids</taxon>
        <taxon>malvids</taxon>
        <taxon>Brassicales</taxon>
        <taxon>Brassicaceae</taxon>
        <taxon>Camelineae</taxon>
        <taxon>Arabidopsis</taxon>
    </lineage>
</organism>
<protein>
    <recommendedName>
        <fullName>Probable serine/threonine-protein kinase WNK6</fullName>
        <shortName>AtWNK6</shortName>
        <ecNumber>2.7.11.1</ecNumber>
    </recommendedName>
    <alternativeName>
        <fullName>Protein kinase with no lysine 6</fullName>
    </alternativeName>
</protein>
<evidence type="ECO:0000250" key="1"/>
<evidence type="ECO:0000250" key="2">
    <source>
        <dbReference type="UniProtKB" id="Q9H4A3"/>
    </source>
</evidence>
<evidence type="ECO:0000250" key="3">
    <source>
        <dbReference type="UniProtKB" id="Q9JIH7"/>
    </source>
</evidence>
<evidence type="ECO:0000255" key="4"/>
<evidence type="ECO:0000255" key="5">
    <source>
        <dbReference type="PROSITE-ProRule" id="PRU00159"/>
    </source>
</evidence>
<evidence type="ECO:0000256" key="6">
    <source>
        <dbReference type="SAM" id="MobiDB-lite"/>
    </source>
</evidence>
<evidence type="ECO:0000269" key="7">
    <source>
    </source>
</evidence>
<evidence type="ECO:0000305" key="8"/>
<keyword id="KW-0025">Alternative splicing</keyword>
<keyword id="KW-0067">ATP-binding</keyword>
<keyword id="KW-0175">Coiled coil</keyword>
<keyword id="KW-0418">Kinase</keyword>
<keyword id="KW-0547">Nucleotide-binding</keyword>
<keyword id="KW-1185">Reference proteome</keyword>
<keyword id="KW-0723">Serine/threonine-protein kinase</keyword>
<keyword id="KW-0808">Transferase</keyword>
<name>WNK6_ARATH</name>
<sequence>MEGTDDASALQEPPDPEVLEVDPTFRYIRYKEVIGKGAFKTVYKAFDEVDGIEVAWNQVRIDDVLQSPNCLERLYSEVRLLKSLKHNNIIRFYNSWIDDKNKTVNIITELFTSGSLRHYRKKHRKVNMKAVKNWARQILMGLRYLHGQEPPIIHRDLKCDNIFINGNHGEVKIGDLGLATVMEQANAKSVIGTPEFMAPELYDENYNELADIYSFGMCMLEMVTFDYPYCECKNSAQIYKKVSSGIKPASLSRVKDPEVKQFIEKCLLPASERLSAKELLLDPFLQLNGLTMNNPLPLPDIVMPKEGAFGDRCLMSEGPPTTRPSKTLSIDLDEDSNLPIVTFSDNSGSRCIEVRRAKRGNFFVLKGEENDEQSVSLILRIVDENGRVRNIHFLFYQEGDTASKVSSEMVEQLELTDQNVTFIAELIDILLVNMIPTWKTDVTVDHLIHSQLNQNSRSHHNEAKPQKQEETVFHDTCELVSHSCNSDCPRSDEEDKQCVDATKGEDKSSIQEVEEATEPVSLEEEERLRQELEEIEAKYQEDMKEIATKREEAIMETKKKLSLMKLK</sequence>
<feature type="chain" id="PRO_0000351664" description="Probable serine/threonine-protein kinase WNK6">
    <location>
        <begin position="1"/>
        <end position="567"/>
    </location>
</feature>
<feature type="domain" description="Protein kinase" evidence="5">
    <location>
        <begin position="28"/>
        <end position="285"/>
    </location>
</feature>
<feature type="region of interest" description="Disordered" evidence="6">
    <location>
        <begin position="499"/>
        <end position="528"/>
    </location>
</feature>
<feature type="coiled-coil region" evidence="4">
    <location>
        <begin position="519"/>
        <end position="553"/>
    </location>
</feature>
<feature type="compositionally biased region" description="Basic and acidic residues" evidence="6">
    <location>
        <begin position="499"/>
        <end position="509"/>
    </location>
</feature>
<feature type="compositionally biased region" description="Acidic residues" evidence="6">
    <location>
        <begin position="512"/>
        <end position="525"/>
    </location>
</feature>
<feature type="active site" description="Proton acceptor" evidence="3">
    <location>
        <position position="175"/>
    </location>
</feature>
<feature type="binding site" evidence="2">
    <location>
        <begin position="108"/>
        <end position="111"/>
    </location>
    <ligand>
        <name>ATP</name>
        <dbReference type="ChEBI" id="CHEBI:30616"/>
    </ligand>
</feature>
<feature type="binding site" evidence="2">
    <location>
        <position position="158"/>
    </location>
    <ligand>
        <name>ATP</name>
        <dbReference type="ChEBI" id="CHEBI:30616"/>
    </ligand>
</feature>
<feature type="splice variant" id="VSP_035530" description="In isoform 2." evidence="8">
    <location>
        <begin position="192"/>
        <end position="258"/>
    </location>
</feature>
<dbReference type="EC" id="2.7.11.1"/>
<dbReference type="EMBL" id="AB084270">
    <property type="protein sequence ID" value="BAB91129.1"/>
    <property type="molecule type" value="mRNA"/>
</dbReference>
<dbReference type="EMBL" id="AB026654">
    <property type="protein sequence ID" value="BAB01801.1"/>
    <property type="status" value="ALT_SEQ"/>
    <property type="molecule type" value="Genomic_DNA"/>
</dbReference>
<dbReference type="EMBL" id="CP002686">
    <property type="protein sequence ID" value="AEE76139.1"/>
    <property type="molecule type" value="Genomic_DNA"/>
</dbReference>
<dbReference type="EMBL" id="CP002686">
    <property type="protein sequence ID" value="AEE76140.1"/>
    <property type="molecule type" value="Genomic_DNA"/>
</dbReference>
<dbReference type="EMBL" id="CP002686">
    <property type="protein sequence ID" value="AEE76141.1"/>
    <property type="molecule type" value="Genomic_DNA"/>
</dbReference>
<dbReference type="EMBL" id="CP002686">
    <property type="protein sequence ID" value="ANM64345.1"/>
    <property type="molecule type" value="Genomic_DNA"/>
</dbReference>
<dbReference type="EMBL" id="CP002686">
    <property type="protein sequence ID" value="ANM64346.1"/>
    <property type="molecule type" value="Genomic_DNA"/>
</dbReference>
<dbReference type="EMBL" id="AK175997">
    <property type="protein sequence ID" value="BAD43760.1"/>
    <property type="molecule type" value="mRNA"/>
</dbReference>
<dbReference type="EMBL" id="BT030341">
    <property type="protein sequence ID" value="ABO38754.1"/>
    <property type="molecule type" value="mRNA"/>
</dbReference>
<dbReference type="RefSeq" id="NP_001030723.1">
    <molecule id="Q8S8Y8-2"/>
    <property type="nucleotide sequence ID" value="NM_001035646.2"/>
</dbReference>
<dbReference type="RefSeq" id="NP_001189928.1">
    <molecule id="Q8S8Y8-1"/>
    <property type="nucleotide sequence ID" value="NM_001202999.2"/>
</dbReference>
<dbReference type="RefSeq" id="NP_001319584.1">
    <molecule id="Q8S8Y8-2"/>
    <property type="nucleotide sequence ID" value="NM_001338354.1"/>
</dbReference>
<dbReference type="RefSeq" id="NP_001326380.1">
    <molecule id="Q8S8Y8-1"/>
    <property type="nucleotide sequence ID" value="NM_001338356.1"/>
</dbReference>
<dbReference type="RefSeq" id="NP_188505.1">
    <molecule id="Q8S8Y8-1"/>
    <property type="nucleotide sequence ID" value="NM_112761.3"/>
</dbReference>
<dbReference type="SMR" id="Q8S8Y8"/>
<dbReference type="FunCoup" id="Q8S8Y8">
    <property type="interactions" value="1701"/>
</dbReference>
<dbReference type="STRING" id="3702.Q8S8Y8"/>
<dbReference type="PaxDb" id="3702-AT3G18750.3"/>
<dbReference type="ProteomicsDB" id="243084">
    <molecule id="Q8S8Y8-1"/>
</dbReference>
<dbReference type="EnsemblPlants" id="AT3G18750.1">
    <molecule id="Q8S8Y8-1"/>
    <property type="protein sequence ID" value="AT3G18750.1"/>
    <property type="gene ID" value="AT3G18750"/>
</dbReference>
<dbReference type="EnsemblPlants" id="AT3G18750.2">
    <molecule id="Q8S8Y8-2"/>
    <property type="protein sequence ID" value="AT3G18750.2"/>
    <property type="gene ID" value="AT3G18750"/>
</dbReference>
<dbReference type="EnsemblPlants" id="AT3G18750.3">
    <molecule id="Q8S8Y8-1"/>
    <property type="protein sequence ID" value="AT3G18750.3"/>
    <property type="gene ID" value="AT3G18750"/>
</dbReference>
<dbReference type="EnsemblPlants" id="AT3G18750.5">
    <molecule id="Q8S8Y8-1"/>
    <property type="protein sequence ID" value="AT3G18750.5"/>
    <property type="gene ID" value="AT3G18750"/>
</dbReference>
<dbReference type="EnsemblPlants" id="AT3G18750.6">
    <molecule id="Q8S8Y8-2"/>
    <property type="protein sequence ID" value="AT3G18750.6"/>
    <property type="gene ID" value="AT3G18750"/>
</dbReference>
<dbReference type="GeneID" id="821406"/>
<dbReference type="Gramene" id="AT3G18750.1">
    <molecule id="Q8S8Y8-1"/>
    <property type="protein sequence ID" value="AT3G18750.1"/>
    <property type="gene ID" value="AT3G18750"/>
</dbReference>
<dbReference type="Gramene" id="AT3G18750.2">
    <molecule id="Q8S8Y8-2"/>
    <property type="protein sequence ID" value="AT3G18750.2"/>
    <property type="gene ID" value="AT3G18750"/>
</dbReference>
<dbReference type="Gramene" id="AT3G18750.3">
    <molecule id="Q8S8Y8-1"/>
    <property type="protein sequence ID" value="AT3G18750.3"/>
    <property type="gene ID" value="AT3G18750"/>
</dbReference>
<dbReference type="Gramene" id="AT3G18750.5">
    <molecule id="Q8S8Y8-1"/>
    <property type="protein sequence ID" value="AT3G18750.5"/>
    <property type="gene ID" value="AT3G18750"/>
</dbReference>
<dbReference type="Gramene" id="AT3G18750.6">
    <molecule id="Q8S8Y8-2"/>
    <property type="protein sequence ID" value="AT3G18750.6"/>
    <property type="gene ID" value="AT3G18750"/>
</dbReference>
<dbReference type="KEGG" id="ath:AT3G18750"/>
<dbReference type="Araport" id="AT3G18750"/>
<dbReference type="TAIR" id="AT3G18750">
    <property type="gene designation" value="WNK6"/>
</dbReference>
<dbReference type="eggNOG" id="KOG0584">
    <property type="taxonomic scope" value="Eukaryota"/>
</dbReference>
<dbReference type="HOGENOM" id="CLU_000288_142_0_1"/>
<dbReference type="InParanoid" id="Q8S8Y8"/>
<dbReference type="OMA" id="FPRVESY"/>
<dbReference type="PhylomeDB" id="Q8S8Y8"/>
<dbReference type="PRO" id="PR:Q8S8Y8"/>
<dbReference type="Proteomes" id="UP000006548">
    <property type="component" value="Chromosome 3"/>
</dbReference>
<dbReference type="ExpressionAtlas" id="Q8S8Y8">
    <property type="expression patterns" value="baseline and differential"/>
</dbReference>
<dbReference type="GO" id="GO:0005524">
    <property type="term" value="F:ATP binding"/>
    <property type="evidence" value="ECO:0007669"/>
    <property type="project" value="UniProtKB-KW"/>
</dbReference>
<dbReference type="GO" id="GO:0004672">
    <property type="term" value="F:protein kinase activity"/>
    <property type="evidence" value="ECO:0000304"/>
    <property type="project" value="TAIR"/>
</dbReference>
<dbReference type="GO" id="GO:0106310">
    <property type="term" value="F:protein serine kinase activity"/>
    <property type="evidence" value="ECO:0007669"/>
    <property type="project" value="RHEA"/>
</dbReference>
<dbReference type="GO" id="GO:0004674">
    <property type="term" value="F:protein serine/threonine kinase activity"/>
    <property type="evidence" value="ECO:0007669"/>
    <property type="project" value="UniProtKB-KW"/>
</dbReference>
<dbReference type="GO" id="GO:0006468">
    <property type="term" value="P:protein phosphorylation"/>
    <property type="evidence" value="ECO:0000304"/>
    <property type="project" value="TAIR"/>
</dbReference>
<dbReference type="CDD" id="cd13983">
    <property type="entry name" value="STKc_WNK"/>
    <property type="match status" value="1"/>
</dbReference>
<dbReference type="FunFam" id="3.30.200.20:FF:000075">
    <property type="entry name" value="Probable serine/threonine-protein kinase WNK1"/>
    <property type="match status" value="1"/>
</dbReference>
<dbReference type="FunFam" id="1.10.510.10:FF:000046">
    <property type="entry name" value="probable serine/threonine-protein kinase WNK9"/>
    <property type="match status" value="1"/>
</dbReference>
<dbReference type="Gene3D" id="3.10.20.90">
    <property type="entry name" value="Phosphatidylinositol 3-kinase Catalytic Subunit, Chain A, domain 1"/>
    <property type="match status" value="1"/>
</dbReference>
<dbReference type="Gene3D" id="3.30.200.20">
    <property type="entry name" value="Phosphorylase Kinase, domain 1"/>
    <property type="match status" value="1"/>
</dbReference>
<dbReference type="Gene3D" id="1.10.510.10">
    <property type="entry name" value="Transferase(Phosphotransferase) domain 1"/>
    <property type="match status" value="1"/>
</dbReference>
<dbReference type="InterPro" id="IPR011009">
    <property type="entry name" value="Kinase-like_dom_sf"/>
</dbReference>
<dbReference type="InterPro" id="IPR000719">
    <property type="entry name" value="Prot_kinase_dom"/>
</dbReference>
<dbReference type="InterPro" id="IPR008271">
    <property type="entry name" value="Ser/Thr_kinase_AS"/>
</dbReference>
<dbReference type="InterPro" id="IPR050588">
    <property type="entry name" value="WNK_Ser-Thr_kinase"/>
</dbReference>
<dbReference type="PANTHER" id="PTHR13902">
    <property type="entry name" value="SERINE/THREONINE-PROTEIN KINASE WNK WITH NO LYSINE -RELATED"/>
    <property type="match status" value="1"/>
</dbReference>
<dbReference type="Pfam" id="PF00069">
    <property type="entry name" value="Pkinase"/>
    <property type="match status" value="1"/>
</dbReference>
<dbReference type="SMART" id="SM00220">
    <property type="entry name" value="S_TKc"/>
    <property type="match status" value="1"/>
</dbReference>
<dbReference type="SUPFAM" id="SSF56112">
    <property type="entry name" value="Protein kinase-like (PK-like)"/>
    <property type="match status" value="1"/>
</dbReference>
<dbReference type="PROSITE" id="PS50011">
    <property type="entry name" value="PROTEIN_KINASE_DOM"/>
    <property type="match status" value="1"/>
</dbReference>
<dbReference type="PROSITE" id="PS00108">
    <property type="entry name" value="PROTEIN_KINASE_ST"/>
    <property type="match status" value="1"/>
</dbReference>
<comment type="function">
    <text evidence="1">May regulate flowering time by modulating the photoperiod pathway.</text>
</comment>
<comment type="catalytic activity">
    <reaction>
        <text>L-seryl-[protein] + ATP = O-phospho-L-seryl-[protein] + ADP + H(+)</text>
        <dbReference type="Rhea" id="RHEA:17989"/>
        <dbReference type="Rhea" id="RHEA-COMP:9863"/>
        <dbReference type="Rhea" id="RHEA-COMP:11604"/>
        <dbReference type="ChEBI" id="CHEBI:15378"/>
        <dbReference type="ChEBI" id="CHEBI:29999"/>
        <dbReference type="ChEBI" id="CHEBI:30616"/>
        <dbReference type="ChEBI" id="CHEBI:83421"/>
        <dbReference type="ChEBI" id="CHEBI:456216"/>
        <dbReference type="EC" id="2.7.11.1"/>
    </reaction>
</comment>
<comment type="catalytic activity">
    <reaction>
        <text>L-threonyl-[protein] + ATP = O-phospho-L-threonyl-[protein] + ADP + H(+)</text>
        <dbReference type="Rhea" id="RHEA:46608"/>
        <dbReference type="Rhea" id="RHEA-COMP:11060"/>
        <dbReference type="Rhea" id="RHEA-COMP:11605"/>
        <dbReference type="ChEBI" id="CHEBI:15378"/>
        <dbReference type="ChEBI" id="CHEBI:30013"/>
        <dbReference type="ChEBI" id="CHEBI:30616"/>
        <dbReference type="ChEBI" id="CHEBI:61977"/>
        <dbReference type="ChEBI" id="CHEBI:456216"/>
        <dbReference type="EC" id="2.7.11.1"/>
    </reaction>
</comment>
<comment type="alternative products">
    <event type="alternative splicing"/>
    <isoform>
        <id>Q8S8Y8-1</id>
        <name>1</name>
        <sequence type="displayed"/>
    </isoform>
    <isoform>
        <id>Q8S8Y8-2</id>
        <name>2</name>
        <sequence type="described" ref="VSP_035530"/>
    </isoform>
</comment>
<comment type="induction">
    <text evidence="7">Expressed with a circadian rhythm showing a peak before dawn.</text>
</comment>
<comment type="similarity">
    <text evidence="5">Belongs to the protein kinase superfamily. Ser/Thr protein kinase family. WNK subfamily.</text>
</comment>
<comment type="caution">
    <text evidence="2">Was named WNK/'with no lysine(K)' because key residues for catalysis, including the lysine involved in ATP binding, are either not conserved or differ compared to the residues described in other kinase family proteins.</text>
</comment>
<comment type="sequence caution" evidence="8">
    <conflict type="erroneous gene model prediction">
        <sequence resource="EMBL-CDS" id="BAB01801"/>
    </conflict>
</comment>
<proteinExistence type="evidence at transcript level"/>
<reference key="1">
    <citation type="journal article" date="2002" name="Biosci. Biotechnol. Biochem.">
        <title>Compilation and characterization of a novel WNK family of protein kinases in Arabiodpsis thaliana with reference to circadian rhythms.</title>
        <authorList>
            <person name="Nakamichi N."/>
            <person name="Murakami-Kojima M."/>
            <person name="Sato E."/>
            <person name="Kishi Y."/>
            <person name="Yamashino T."/>
            <person name="Mizuno T."/>
        </authorList>
    </citation>
    <scope>NUCLEOTIDE SEQUENCE [MRNA] (ISOFORM 1)</scope>
    <scope>INDUCTION</scope>
    <source>
        <strain>cv. Columbia</strain>
    </source>
</reference>
<reference key="2">
    <citation type="journal article" date="2000" name="DNA Res.">
        <title>Structural analysis of Arabidopsis thaliana chromosome 3. I. Sequence features of the regions of 4,504,864 bp covered by sixty P1 and TAC clones.</title>
        <authorList>
            <person name="Sato S."/>
            <person name="Nakamura Y."/>
            <person name="Kaneko T."/>
            <person name="Katoh T."/>
            <person name="Asamizu E."/>
            <person name="Tabata S."/>
        </authorList>
    </citation>
    <scope>NUCLEOTIDE SEQUENCE [LARGE SCALE GENOMIC DNA]</scope>
    <source>
        <strain>cv. Columbia</strain>
    </source>
</reference>
<reference key="3">
    <citation type="journal article" date="2017" name="Plant J.">
        <title>Araport11: a complete reannotation of the Arabidopsis thaliana reference genome.</title>
        <authorList>
            <person name="Cheng C.Y."/>
            <person name="Krishnakumar V."/>
            <person name="Chan A.P."/>
            <person name="Thibaud-Nissen F."/>
            <person name="Schobel S."/>
            <person name="Town C.D."/>
        </authorList>
    </citation>
    <scope>GENOME REANNOTATION</scope>
    <source>
        <strain>cv. Columbia</strain>
    </source>
</reference>
<reference key="4">
    <citation type="submission" date="2004-09" db="EMBL/GenBank/DDBJ databases">
        <title>Large-scale analysis of RIKEN Arabidopsis full-length (RAFL) cDNAs.</title>
        <authorList>
            <person name="Totoki Y."/>
            <person name="Seki M."/>
            <person name="Ishida J."/>
            <person name="Nakajima M."/>
            <person name="Enju A."/>
            <person name="Kamiya A."/>
            <person name="Narusaka M."/>
            <person name="Shin-i T."/>
            <person name="Nakagawa M."/>
            <person name="Sakamoto N."/>
            <person name="Oishi K."/>
            <person name="Kohara Y."/>
            <person name="Kobayashi M."/>
            <person name="Toyoda A."/>
            <person name="Sakaki Y."/>
            <person name="Sakurai T."/>
            <person name="Iida K."/>
            <person name="Akiyama K."/>
            <person name="Satou M."/>
            <person name="Toyoda T."/>
            <person name="Konagaya A."/>
            <person name="Carninci P."/>
            <person name="Kawai J."/>
            <person name="Hayashizaki Y."/>
            <person name="Shinozaki K."/>
        </authorList>
    </citation>
    <scope>NUCLEOTIDE SEQUENCE [LARGE SCALE MRNA] (ISOFORM 1)</scope>
    <source>
        <strain>cv. Columbia</strain>
    </source>
</reference>
<reference key="5">
    <citation type="submission" date="2007-03" db="EMBL/GenBank/DDBJ databases">
        <title>Arabidopsis ORF clones.</title>
        <authorList>
            <person name="Bautista V.R."/>
            <person name="Kim C.J."/>
            <person name="Chen H."/>
            <person name="Wu S.Y."/>
            <person name="De Los Reyes C."/>
            <person name="Ecker J.R."/>
        </authorList>
    </citation>
    <scope>NUCLEOTIDE SEQUENCE [LARGE SCALE MRNA] (ISOFORM 1)</scope>
    <source>
        <strain>cv. Columbia</strain>
    </source>
</reference>
<gene>
    <name type="primary">WNK6</name>
    <name type="ordered locus">At3g18750</name>
    <name type="ORF">MVE11.20</name>
</gene>